<evidence type="ECO:0000255" key="1"/>
<evidence type="ECO:0000255" key="2">
    <source>
        <dbReference type="PROSITE-ProRule" id="PRU01087"/>
    </source>
</evidence>
<evidence type="ECO:0000269" key="3">
    <source>
    </source>
</evidence>
<evidence type="ECO:0000269" key="4">
    <source>
    </source>
</evidence>
<evidence type="ECO:0000269" key="5">
    <source>
    </source>
</evidence>
<evidence type="ECO:0000269" key="6">
    <source>
    </source>
</evidence>
<evidence type="ECO:0000269" key="7">
    <source>
    </source>
</evidence>
<evidence type="ECO:0000269" key="8">
    <source>
    </source>
</evidence>
<evidence type="ECO:0000303" key="9">
    <source>
    </source>
</evidence>
<evidence type="ECO:0000305" key="10"/>
<evidence type="ECO:0000305" key="11">
    <source>
    </source>
</evidence>
<organism>
    <name type="scientific">Saccharomyces cerevisiae (strain ATCC 204508 / S288c)</name>
    <name type="common">Baker's yeast</name>
    <dbReference type="NCBI Taxonomy" id="559292"/>
    <lineage>
        <taxon>Eukaryota</taxon>
        <taxon>Fungi</taxon>
        <taxon>Dikarya</taxon>
        <taxon>Ascomycota</taxon>
        <taxon>Saccharomycotina</taxon>
        <taxon>Saccharomycetes</taxon>
        <taxon>Saccharomycetales</taxon>
        <taxon>Saccharomycetaceae</taxon>
        <taxon>Saccharomyces</taxon>
    </lineage>
</organism>
<accession>Q12155</accession>
<accession>D6VY52</accession>
<name>EMA19_YEAST</name>
<feature type="chain" id="PRO_0000247205" description="Efficient mitochondria targeting-associated protein 19">
    <location>
        <begin position="1"/>
        <end position="161"/>
    </location>
</feature>
<feature type="topological domain" description="Cytoplasmic" evidence="11">
    <location>
        <begin position="1"/>
        <end position="10"/>
    </location>
</feature>
<feature type="transmembrane region" description="Helical" evidence="1">
    <location>
        <begin position="11"/>
        <end position="31"/>
    </location>
</feature>
<feature type="topological domain" description="Lumenal" evidence="11">
    <location>
        <begin position="32"/>
        <end position="61"/>
    </location>
</feature>
<feature type="transmembrane region" description="Helical" evidence="1">
    <location>
        <begin position="62"/>
        <end position="82"/>
    </location>
</feature>
<feature type="topological domain" description="Cytoplasmic" evidence="11">
    <location>
        <begin position="83"/>
        <end position="101"/>
    </location>
</feature>
<feature type="transmembrane region" description="Helical" evidence="1">
    <location>
        <begin position="102"/>
        <end position="122"/>
    </location>
</feature>
<feature type="topological domain" description="Lumenal" evidence="11">
    <location>
        <begin position="123"/>
        <end position="141"/>
    </location>
</feature>
<feature type="transmembrane region" description="Helical" evidence="1">
    <location>
        <begin position="142"/>
        <end position="160"/>
    </location>
</feature>
<feature type="topological domain" description="Cytoplasmic" evidence="5">
    <location>
        <position position="161"/>
    </location>
</feature>
<feature type="domain" description="EXPERA" evidence="2">
    <location>
        <begin position="7"/>
        <end position="159"/>
    </location>
</feature>
<protein>
    <recommendedName>
        <fullName evidence="9">Efficient mitochondria targeting-associated protein 19</fullName>
    </recommendedName>
</protein>
<proteinExistence type="evidence at protein level"/>
<comment type="function">
    <text evidence="7 8">Part of an import route for newly synthesized mitochondrial proteins termed the ER-SURF pathway (ER surface-mediated protein targeting), which retrieves mitochondrial precursor proteins from the ER surface and reroutes them to mitochondria for efficient mitochondrial import (PubMed:30213914). Acts as a quality control factor in the ER, promoting the proteolytic degradation of nonproductive and extramitochondrial precursor proteins in the ER membrane thus removing them from the ER surface (PubMed:33596095).</text>
</comment>
<comment type="subcellular location">
    <subcellularLocation>
        <location evidence="3 6 7 8">Endoplasmic reticulum membrane</location>
        <topology evidence="1">Multi-pass membrane protein</topology>
    </subcellularLocation>
    <text evidence="8">Localizes to perinuclear ER membranes.</text>
</comment>
<comment type="miscellaneous">
    <text evidence="4">Present with 358 molecules/cell in log phase SD medium.</text>
</comment>
<comment type="similarity">
    <text evidence="10">Belongs to the TMEM97/sigma-2 receptor family.</text>
</comment>
<gene>
    <name evidence="9" type="primary">EMA19</name>
    <name type="ordered locus">YLR050C</name>
    <name type="ORF">L2125</name>
</gene>
<dbReference type="EMBL" id="X94607">
    <property type="protein sequence ID" value="CAA64297.1"/>
    <property type="molecule type" value="Genomic_DNA"/>
</dbReference>
<dbReference type="EMBL" id="Z73222">
    <property type="protein sequence ID" value="CAA97580.1"/>
    <property type="molecule type" value="Genomic_DNA"/>
</dbReference>
<dbReference type="EMBL" id="AY557932">
    <property type="protein sequence ID" value="AAS56258.1"/>
    <property type="molecule type" value="Genomic_DNA"/>
</dbReference>
<dbReference type="EMBL" id="BK006945">
    <property type="protein sequence ID" value="DAA09368.1"/>
    <property type="molecule type" value="Genomic_DNA"/>
</dbReference>
<dbReference type="PIR" id="S61624">
    <property type="entry name" value="S61624"/>
</dbReference>
<dbReference type="RefSeq" id="NP_013151.1">
    <property type="nucleotide sequence ID" value="NM_001181937.1"/>
</dbReference>
<dbReference type="SMR" id="Q12155"/>
<dbReference type="BioGRID" id="31325">
    <property type="interactions" value="81"/>
</dbReference>
<dbReference type="DIP" id="DIP-4746N"/>
<dbReference type="FunCoup" id="Q12155">
    <property type="interactions" value="53"/>
</dbReference>
<dbReference type="IntAct" id="Q12155">
    <property type="interactions" value="3"/>
</dbReference>
<dbReference type="MINT" id="Q12155"/>
<dbReference type="STRING" id="4932.YLR050C"/>
<dbReference type="TCDB" id="3.A.30.1.1">
    <property type="family name" value="the endoplasmic reticulum surface retrieval pathway (er-surf) family"/>
</dbReference>
<dbReference type="PaxDb" id="4932-YLR050C"/>
<dbReference type="PeptideAtlas" id="Q12155"/>
<dbReference type="EnsemblFungi" id="YLR050C_mRNA">
    <property type="protein sequence ID" value="YLR050C"/>
    <property type="gene ID" value="YLR050C"/>
</dbReference>
<dbReference type="GeneID" id="850739"/>
<dbReference type="KEGG" id="sce:YLR050C"/>
<dbReference type="AGR" id="SGD:S000004040"/>
<dbReference type="SGD" id="S000004040">
    <property type="gene designation" value="EMA19"/>
</dbReference>
<dbReference type="VEuPathDB" id="FungiDB:YLR050C"/>
<dbReference type="eggNOG" id="ENOG502S75H">
    <property type="taxonomic scope" value="Eukaryota"/>
</dbReference>
<dbReference type="GeneTree" id="ENSGT00390000007149"/>
<dbReference type="HOGENOM" id="CLU_086812_4_0_1"/>
<dbReference type="InParanoid" id="Q12155"/>
<dbReference type="OMA" id="EFKDPMV"/>
<dbReference type="OrthoDB" id="433124at2759"/>
<dbReference type="BioCyc" id="YEAST:G3O-32206-MONOMER"/>
<dbReference type="BioGRID-ORCS" id="850739">
    <property type="hits" value="6 hits in 10 CRISPR screens"/>
</dbReference>
<dbReference type="PRO" id="PR:Q12155"/>
<dbReference type="Proteomes" id="UP000002311">
    <property type="component" value="Chromosome XII"/>
</dbReference>
<dbReference type="RNAct" id="Q12155">
    <property type="molecule type" value="protein"/>
</dbReference>
<dbReference type="GO" id="GO:0005783">
    <property type="term" value="C:endoplasmic reticulum"/>
    <property type="evidence" value="ECO:0007005"/>
    <property type="project" value="SGD"/>
</dbReference>
<dbReference type="GO" id="GO:0005789">
    <property type="term" value="C:endoplasmic reticulum membrane"/>
    <property type="evidence" value="ECO:0007669"/>
    <property type="project" value="UniProtKB-SubCell"/>
</dbReference>
<dbReference type="GO" id="GO:0006626">
    <property type="term" value="P:protein targeting to mitochondrion"/>
    <property type="evidence" value="ECO:0000315"/>
    <property type="project" value="SGD"/>
</dbReference>
<dbReference type="InterPro" id="IPR033118">
    <property type="entry name" value="EXPERA"/>
</dbReference>
<dbReference type="InterPro" id="IPR051987">
    <property type="entry name" value="Sigma-2_receptor-like"/>
</dbReference>
<dbReference type="InterPro" id="IPR016964">
    <property type="entry name" value="Sigma2_recept"/>
</dbReference>
<dbReference type="PANTHER" id="PTHR31204">
    <property type="entry name" value="SIGMA INTRACELLULAR RECEPTOR 2"/>
    <property type="match status" value="1"/>
</dbReference>
<dbReference type="PANTHER" id="PTHR31204:SF1">
    <property type="entry name" value="SIGMA INTRACELLULAR RECEPTOR 2"/>
    <property type="match status" value="1"/>
</dbReference>
<dbReference type="Pfam" id="PF05241">
    <property type="entry name" value="EBP"/>
    <property type="match status" value="1"/>
</dbReference>
<dbReference type="PIRSF" id="PIRSF031032">
    <property type="entry name" value="TMP_97_prd"/>
    <property type="match status" value="1"/>
</dbReference>
<dbReference type="PROSITE" id="PS51751">
    <property type="entry name" value="EXPERA"/>
    <property type="match status" value="1"/>
</dbReference>
<keyword id="KW-0256">Endoplasmic reticulum</keyword>
<keyword id="KW-0472">Membrane</keyword>
<keyword id="KW-1185">Reference proteome</keyword>
<keyword id="KW-0812">Transmembrane</keyword>
<keyword id="KW-1133">Transmembrane helix</keyword>
<sequence length="161" mass="19089">MKLGHREQQFYLWYFIVHIPITIFIDSSVVIPAKWQLGIAQKVVSDHIAKQHDFLLSEKPEWLYWFVVLELVLQLPLFVYFVNKFWNSSELQVNTNSRLKKWLRIYGWNASLTTLICIVVIFKRGYIPYDVLKTSLSMTQKCQLASVYLPTFLIPLRLCFV</sequence>
<reference key="1">
    <citation type="journal article" date="1997" name="Nature">
        <title>The nucleotide sequence of Saccharomyces cerevisiae chromosome XII.</title>
        <authorList>
            <person name="Johnston M."/>
            <person name="Hillier L.W."/>
            <person name="Riles L."/>
            <person name="Albermann K."/>
            <person name="Andre B."/>
            <person name="Ansorge W."/>
            <person name="Benes V."/>
            <person name="Brueckner M."/>
            <person name="Delius H."/>
            <person name="Dubois E."/>
            <person name="Duesterhoeft A."/>
            <person name="Entian K.-D."/>
            <person name="Floeth M."/>
            <person name="Goffeau A."/>
            <person name="Hebling U."/>
            <person name="Heumann K."/>
            <person name="Heuss-Neitzel D."/>
            <person name="Hilbert H."/>
            <person name="Hilger F."/>
            <person name="Kleine K."/>
            <person name="Koetter P."/>
            <person name="Louis E.J."/>
            <person name="Messenguy F."/>
            <person name="Mewes H.-W."/>
            <person name="Miosga T."/>
            <person name="Moestl D."/>
            <person name="Mueller-Auer S."/>
            <person name="Nentwich U."/>
            <person name="Obermaier B."/>
            <person name="Piravandi E."/>
            <person name="Pohl T.M."/>
            <person name="Portetelle D."/>
            <person name="Purnelle B."/>
            <person name="Rechmann S."/>
            <person name="Rieger M."/>
            <person name="Rinke M."/>
            <person name="Rose M."/>
            <person name="Scharfe M."/>
            <person name="Scherens B."/>
            <person name="Scholler P."/>
            <person name="Schwager C."/>
            <person name="Schwarz S."/>
            <person name="Underwood A.P."/>
            <person name="Urrestarazu L.A."/>
            <person name="Vandenbol M."/>
            <person name="Verhasselt P."/>
            <person name="Vierendeels F."/>
            <person name="Voet M."/>
            <person name="Volckaert G."/>
            <person name="Voss H."/>
            <person name="Wambutt R."/>
            <person name="Wedler E."/>
            <person name="Wedler H."/>
            <person name="Zimmermann F.K."/>
            <person name="Zollner A."/>
            <person name="Hani J."/>
            <person name="Hoheisel J.D."/>
        </authorList>
    </citation>
    <scope>NUCLEOTIDE SEQUENCE [LARGE SCALE GENOMIC DNA]</scope>
    <source>
        <strain>ATCC 204508 / S288c</strain>
    </source>
</reference>
<reference key="2">
    <citation type="journal article" date="2014" name="G3 (Bethesda)">
        <title>The reference genome sequence of Saccharomyces cerevisiae: Then and now.</title>
        <authorList>
            <person name="Engel S.R."/>
            <person name="Dietrich F.S."/>
            <person name="Fisk D.G."/>
            <person name="Binkley G."/>
            <person name="Balakrishnan R."/>
            <person name="Costanzo M.C."/>
            <person name="Dwight S.S."/>
            <person name="Hitz B.C."/>
            <person name="Karra K."/>
            <person name="Nash R.S."/>
            <person name="Weng S."/>
            <person name="Wong E.D."/>
            <person name="Lloyd P."/>
            <person name="Skrzypek M.S."/>
            <person name="Miyasato S.R."/>
            <person name="Simison M."/>
            <person name="Cherry J.M."/>
        </authorList>
    </citation>
    <scope>GENOME REANNOTATION</scope>
    <source>
        <strain>ATCC 204508 / S288c</strain>
    </source>
</reference>
<reference key="3">
    <citation type="journal article" date="2007" name="Genome Res.">
        <title>Approaching a complete repository of sequence-verified protein-encoding clones for Saccharomyces cerevisiae.</title>
        <authorList>
            <person name="Hu Y."/>
            <person name="Rolfs A."/>
            <person name="Bhullar B."/>
            <person name="Murthy T.V.S."/>
            <person name="Zhu C."/>
            <person name="Berger M.F."/>
            <person name="Camargo A.A."/>
            <person name="Kelley F."/>
            <person name="McCarron S."/>
            <person name="Jepson D."/>
            <person name="Richardson A."/>
            <person name="Raphael J."/>
            <person name="Moreira D."/>
            <person name="Taycher E."/>
            <person name="Zuo D."/>
            <person name="Mohr S."/>
            <person name="Kane M.F."/>
            <person name="Williamson J."/>
            <person name="Simpson A.J.G."/>
            <person name="Bulyk M.L."/>
            <person name="Harlow E."/>
            <person name="Marsischky G."/>
            <person name="Kolodner R.D."/>
            <person name="LaBaer J."/>
        </authorList>
    </citation>
    <scope>NUCLEOTIDE SEQUENCE [GENOMIC DNA]</scope>
    <source>
        <strain>ATCC 204508 / S288c</strain>
    </source>
</reference>
<reference key="4">
    <citation type="journal article" date="2003" name="Nature">
        <title>Global analysis of protein localization in budding yeast.</title>
        <authorList>
            <person name="Huh W.-K."/>
            <person name="Falvo J.V."/>
            <person name="Gerke L.C."/>
            <person name="Carroll A.S."/>
            <person name="Howson R.W."/>
            <person name="Weissman J.S."/>
            <person name="O'Shea E.K."/>
        </authorList>
    </citation>
    <scope>SUBCELLULAR LOCATION [LARGE SCALE ANALYSIS]</scope>
</reference>
<reference key="5">
    <citation type="journal article" date="2003" name="Nature">
        <title>Global analysis of protein expression in yeast.</title>
        <authorList>
            <person name="Ghaemmaghami S."/>
            <person name="Huh W.-K."/>
            <person name="Bower K."/>
            <person name="Howson R.W."/>
            <person name="Belle A."/>
            <person name="Dephoure N."/>
            <person name="O'Shea E.K."/>
            <person name="Weissman J.S."/>
        </authorList>
    </citation>
    <scope>LEVEL OF PROTEIN EXPRESSION [LARGE SCALE ANALYSIS]</scope>
</reference>
<reference key="6">
    <citation type="journal article" date="2006" name="Proc. Natl. Acad. Sci. U.S.A.">
        <title>A global topology map of the Saccharomyces cerevisiae membrane proteome.</title>
        <authorList>
            <person name="Kim H."/>
            <person name="Melen K."/>
            <person name="Oesterberg M."/>
            <person name="von Heijne G."/>
        </authorList>
    </citation>
    <scope>TOPOLOGY [LARGE SCALE ANALYSIS]</scope>
    <source>
        <strain>ATCC 208353 / W303-1A</strain>
    </source>
</reference>
<reference key="7">
    <citation type="journal article" date="2016" name="Nat. Methods">
        <title>One library to make them all: streamlining the creation of yeast libraries via a SWAp-Tag strategy.</title>
        <authorList>
            <person name="Yofe I."/>
            <person name="Weill U."/>
            <person name="Meurer M."/>
            <person name="Chuartzman S."/>
            <person name="Zalckvar E."/>
            <person name="Goldman O."/>
            <person name="Ben-Dor S."/>
            <person name="Schuetze C."/>
            <person name="Wiedemann N."/>
            <person name="Knop M."/>
            <person name="Khmelinskii A."/>
            <person name="Schuldiner M."/>
        </authorList>
    </citation>
    <scope>SUBCELLULAR LOCATION [LARGE SCALE ANALYSIS]</scope>
</reference>
<reference key="8">
    <citation type="journal article" date="2018" name="Science">
        <title>An ER surface retrieval pathway safeguards the import of mitochondrial membrane proteins in yeast.</title>
        <authorList>
            <person name="Hansen K.G."/>
            <person name="Aviram N."/>
            <person name="Laborenz J."/>
            <person name="Bibi C."/>
            <person name="Meyer M."/>
            <person name="Spang A."/>
            <person name="Schuldiner M."/>
            <person name="Herrmann J.M."/>
        </authorList>
    </citation>
    <scope>FUNCTION</scope>
    <scope>SUBCELLULAR LOCATION</scope>
</reference>
<reference key="9">
    <citation type="journal article" date="2021" name="Mol. Biol. Cell">
        <title>The ER protein Ema19 facilitates the degradation of nonimported mitochondrial precursor proteins.</title>
        <authorList>
            <person name="Laborenz J."/>
            <person name="Bykov Y.S."/>
            <person name="Knoeringer K."/>
            <person name="Raeschle M."/>
            <person name="Filker S."/>
            <person name="Prescianotto-Baschong C."/>
            <person name="Spang A."/>
            <person name="Tatsuta T."/>
            <person name="Langer T."/>
            <person name="Storchova Z."/>
            <person name="Schuldiner M."/>
            <person name="Herrmann J.M."/>
        </authorList>
    </citation>
    <scope>FUNCTION</scope>
    <scope>SUBCELLULAR LOCATION</scope>
</reference>